<reference key="1">
    <citation type="journal article" date="2008" name="J. Bacteriol.">
        <title>Insights into the environmental resistance gene pool from the genome sequence of the multidrug-resistant environmental isolate Escherichia coli SMS-3-5.</title>
        <authorList>
            <person name="Fricke W.F."/>
            <person name="Wright M.S."/>
            <person name="Lindell A.H."/>
            <person name="Harkins D.M."/>
            <person name="Baker-Austin C."/>
            <person name="Ravel J."/>
            <person name="Stepanauskas R."/>
        </authorList>
    </citation>
    <scope>NUCLEOTIDE SEQUENCE [LARGE SCALE GENOMIC DNA]</scope>
    <source>
        <strain>SMS-3-5 / SECEC</strain>
    </source>
</reference>
<accession>B1LNM2</accession>
<organism>
    <name type="scientific">Escherichia coli (strain SMS-3-5 / SECEC)</name>
    <dbReference type="NCBI Taxonomy" id="439855"/>
    <lineage>
        <taxon>Bacteria</taxon>
        <taxon>Pseudomonadati</taxon>
        <taxon>Pseudomonadota</taxon>
        <taxon>Gammaproteobacteria</taxon>
        <taxon>Enterobacterales</taxon>
        <taxon>Enterobacteriaceae</taxon>
        <taxon>Escherichia</taxon>
    </lineage>
</organism>
<proteinExistence type="inferred from homology"/>
<sequence length="255" mass="26972">MRHPLVMGNWKLNGSRHMVHELVSNLRKELAGVAGCAVAIAPPEMYIDMAKREAEGSHIMLGAQNVDLNLSGAFTGETSAAMLKDIGAQYIIIGHSERRTYHKESDELIAKKFAVLKEQGLTPVLCIGETEAENEAGKTEEVCARQIDAVLKTQGAAAFEGAVIAYEPVWAIGTGKSATPAQAQAVHKFIRDHIAKVDANIAEQVIIQYGGSVNASNAAELFAQPDIDGALVGGASLKADAFAVIVKAAEAAKQA</sequence>
<name>TPIS_ECOSM</name>
<evidence type="ECO:0000255" key="1">
    <source>
        <dbReference type="HAMAP-Rule" id="MF_00147"/>
    </source>
</evidence>
<comment type="function">
    <text evidence="1">Involved in the gluconeogenesis. Catalyzes stereospecifically the conversion of dihydroxyacetone phosphate (DHAP) to D-glyceraldehyde-3-phosphate (G3P).</text>
</comment>
<comment type="catalytic activity">
    <reaction evidence="1">
        <text>D-glyceraldehyde 3-phosphate = dihydroxyacetone phosphate</text>
        <dbReference type="Rhea" id="RHEA:18585"/>
        <dbReference type="ChEBI" id="CHEBI:57642"/>
        <dbReference type="ChEBI" id="CHEBI:59776"/>
        <dbReference type="EC" id="5.3.1.1"/>
    </reaction>
</comment>
<comment type="pathway">
    <text evidence="1">Carbohydrate biosynthesis; gluconeogenesis.</text>
</comment>
<comment type="pathway">
    <text evidence="1">Carbohydrate degradation; glycolysis; D-glyceraldehyde 3-phosphate from glycerone phosphate: step 1/1.</text>
</comment>
<comment type="subunit">
    <text evidence="1">Homodimer.</text>
</comment>
<comment type="subcellular location">
    <subcellularLocation>
        <location evidence="1">Cytoplasm</location>
    </subcellularLocation>
</comment>
<comment type="similarity">
    <text evidence="1">Belongs to the triosephosphate isomerase family.</text>
</comment>
<dbReference type="EC" id="5.3.1.1" evidence="1"/>
<dbReference type="EMBL" id="CP000970">
    <property type="protein sequence ID" value="ACB16293.1"/>
    <property type="molecule type" value="Genomic_DNA"/>
</dbReference>
<dbReference type="RefSeq" id="WP_001216325.1">
    <property type="nucleotide sequence ID" value="NC_010498.1"/>
</dbReference>
<dbReference type="SMR" id="B1LNM2"/>
<dbReference type="GeneID" id="93777979"/>
<dbReference type="KEGG" id="ecm:EcSMS35_4359"/>
<dbReference type="HOGENOM" id="CLU_024251_2_1_6"/>
<dbReference type="UniPathway" id="UPA00109">
    <property type="reaction ID" value="UER00189"/>
</dbReference>
<dbReference type="UniPathway" id="UPA00138"/>
<dbReference type="Proteomes" id="UP000007011">
    <property type="component" value="Chromosome"/>
</dbReference>
<dbReference type="GO" id="GO:0005829">
    <property type="term" value="C:cytosol"/>
    <property type="evidence" value="ECO:0007669"/>
    <property type="project" value="TreeGrafter"/>
</dbReference>
<dbReference type="GO" id="GO:0004807">
    <property type="term" value="F:triose-phosphate isomerase activity"/>
    <property type="evidence" value="ECO:0007669"/>
    <property type="project" value="UniProtKB-UniRule"/>
</dbReference>
<dbReference type="GO" id="GO:0006094">
    <property type="term" value="P:gluconeogenesis"/>
    <property type="evidence" value="ECO:0007669"/>
    <property type="project" value="UniProtKB-UniRule"/>
</dbReference>
<dbReference type="GO" id="GO:0046166">
    <property type="term" value="P:glyceraldehyde-3-phosphate biosynthetic process"/>
    <property type="evidence" value="ECO:0007669"/>
    <property type="project" value="TreeGrafter"/>
</dbReference>
<dbReference type="GO" id="GO:0019563">
    <property type="term" value="P:glycerol catabolic process"/>
    <property type="evidence" value="ECO:0007669"/>
    <property type="project" value="TreeGrafter"/>
</dbReference>
<dbReference type="GO" id="GO:0006096">
    <property type="term" value="P:glycolytic process"/>
    <property type="evidence" value="ECO:0007669"/>
    <property type="project" value="UniProtKB-UniRule"/>
</dbReference>
<dbReference type="CDD" id="cd00311">
    <property type="entry name" value="TIM"/>
    <property type="match status" value="1"/>
</dbReference>
<dbReference type="FunFam" id="3.20.20.70:FF:000020">
    <property type="entry name" value="Triosephosphate isomerase"/>
    <property type="match status" value="1"/>
</dbReference>
<dbReference type="Gene3D" id="3.20.20.70">
    <property type="entry name" value="Aldolase class I"/>
    <property type="match status" value="1"/>
</dbReference>
<dbReference type="HAMAP" id="MF_00147_B">
    <property type="entry name" value="TIM_B"/>
    <property type="match status" value="1"/>
</dbReference>
<dbReference type="InterPro" id="IPR013785">
    <property type="entry name" value="Aldolase_TIM"/>
</dbReference>
<dbReference type="InterPro" id="IPR035990">
    <property type="entry name" value="TIM_sf"/>
</dbReference>
<dbReference type="InterPro" id="IPR022896">
    <property type="entry name" value="TrioseP_Isoase_bac/euk"/>
</dbReference>
<dbReference type="InterPro" id="IPR000652">
    <property type="entry name" value="Triosephosphate_isomerase"/>
</dbReference>
<dbReference type="InterPro" id="IPR020861">
    <property type="entry name" value="Triosephosphate_isomerase_AS"/>
</dbReference>
<dbReference type="NCBIfam" id="TIGR00419">
    <property type="entry name" value="tim"/>
    <property type="match status" value="1"/>
</dbReference>
<dbReference type="PANTHER" id="PTHR21139">
    <property type="entry name" value="TRIOSEPHOSPHATE ISOMERASE"/>
    <property type="match status" value="1"/>
</dbReference>
<dbReference type="PANTHER" id="PTHR21139:SF42">
    <property type="entry name" value="TRIOSEPHOSPHATE ISOMERASE"/>
    <property type="match status" value="1"/>
</dbReference>
<dbReference type="Pfam" id="PF00121">
    <property type="entry name" value="TIM"/>
    <property type="match status" value="1"/>
</dbReference>
<dbReference type="SUPFAM" id="SSF51351">
    <property type="entry name" value="Triosephosphate isomerase (TIM)"/>
    <property type="match status" value="1"/>
</dbReference>
<dbReference type="PROSITE" id="PS00171">
    <property type="entry name" value="TIM_1"/>
    <property type="match status" value="1"/>
</dbReference>
<dbReference type="PROSITE" id="PS51440">
    <property type="entry name" value="TIM_2"/>
    <property type="match status" value="1"/>
</dbReference>
<keyword id="KW-0963">Cytoplasm</keyword>
<keyword id="KW-0312">Gluconeogenesis</keyword>
<keyword id="KW-0324">Glycolysis</keyword>
<keyword id="KW-0413">Isomerase</keyword>
<protein>
    <recommendedName>
        <fullName evidence="1">Triosephosphate isomerase</fullName>
        <shortName evidence="1">TIM</shortName>
        <shortName evidence="1">TPI</shortName>
        <ecNumber evidence="1">5.3.1.1</ecNumber>
    </recommendedName>
    <alternativeName>
        <fullName evidence="1">Triose-phosphate isomerase</fullName>
    </alternativeName>
</protein>
<gene>
    <name evidence="1" type="primary">tpiA</name>
    <name type="ordered locus">EcSMS35_4359</name>
</gene>
<feature type="chain" id="PRO_1000196981" description="Triosephosphate isomerase">
    <location>
        <begin position="1"/>
        <end position="255"/>
    </location>
</feature>
<feature type="active site" description="Electrophile" evidence="1">
    <location>
        <position position="95"/>
    </location>
</feature>
<feature type="active site" description="Proton acceptor" evidence="1">
    <location>
        <position position="167"/>
    </location>
</feature>
<feature type="binding site" evidence="1">
    <location>
        <begin position="9"/>
        <end position="11"/>
    </location>
    <ligand>
        <name>substrate</name>
    </ligand>
</feature>
<feature type="binding site" evidence="1">
    <location>
        <position position="173"/>
    </location>
    <ligand>
        <name>substrate</name>
    </ligand>
</feature>
<feature type="binding site" evidence="1">
    <location>
        <position position="212"/>
    </location>
    <ligand>
        <name>substrate</name>
    </ligand>
</feature>
<feature type="binding site" evidence="1">
    <location>
        <begin position="233"/>
        <end position="234"/>
    </location>
    <ligand>
        <name>substrate</name>
    </ligand>
</feature>